<gene>
    <name type="primary">HMLALPHA3</name>
    <name type="synonym">alpha3</name>
    <name type="ordered locus">KLLA0C00396g</name>
</gene>
<name>MTAL3_KLULA</name>
<organism>
    <name type="scientific">Kluyveromyces lactis (strain ATCC 8585 / CBS 2359 / DSM 70799 / NBRC 1267 / NRRL Y-1140 / WM37)</name>
    <name type="common">Yeast</name>
    <name type="synonym">Candida sphaerica</name>
    <dbReference type="NCBI Taxonomy" id="284590"/>
    <lineage>
        <taxon>Eukaryota</taxon>
        <taxon>Fungi</taxon>
        <taxon>Dikarya</taxon>
        <taxon>Ascomycota</taxon>
        <taxon>Saccharomycotina</taxon>
        <taxon>Saccharomycetes</taxon>
        <taxon>Saccharomycetales</taxon>
        <taxon>Saccharomycetaceae</taxon>
        <taxon>Kluyveromyces</taxon>
    </lineage>
</organism>
<proteinExistence type="evidence at transcript level"/>
<keyword id="KW-1185">Reference proteome</keyword>
<comment type="function">
    <text evidence="1">Mating type proteins are sequence specific DNA-binding proteins that act as master switches in yeast differentiation by controlling gene expression in a cell type-specific fashion. Required for efficient mating as an alpha-cell.</text>
</comment>
<comment type="developmental stage">
    <text evidence="1">Only present in alpha-cells and in a/alpha diploid cells.</text>
</comment>
<comment type="miscellaneous">
    <text>There are three genetic loci for mating type genes in K.lactis. MAT is the expression locus that determines the mating type of the cell, whereas HML (containing HMLALPHA1, HMLALPHA2 and HMLALPHA3) and HMR (containing HMRA1 and HMRA2) represent silenced repositories of mating type information. Notably, HMLALPHA3 is not silenced in K.lactis. The mating type is determined by the MAT locus, which contains either a copy of HML or of HMR. Diploid cells are usually heterozygous for the MAT locus.</text>
</comment>
<sequence length="897" mass="105427">MAQVDVTRWVIHPSGSYESETRKRKLREEKRRKLNEIKRASLVLNDSDFKNFEHWLVTSKGVGEYEQVFDFNFDAYTTRGKPAVDSSTSYSDNIFIDGDKNCKIDTKTISFLDRKYQSNNQTKIESEKQMHVITLKNEQLIEECKNIRERLLELIREGTGYIFVRGWTGYRVNTIILKCHCKQDKCHQILKPRCNVKKHHDPDNLKQFNCFSSFSVHFNVKLNTIKICFCHKSKHETLPITIIPASLRQYISTNLCFTARECFECLKRTPVYLEFTKSFDAKAIVRKIWKEISESQWNLDPDSKRSASKILKRFQNTGDVALLPVDNCSADLNISLQKAKPIAFIYERIISEIQHDVTEIVIDSTFCLSTDYKQYFVVVASFFGKGVPVGFMATETNNVDHLTILWFLRSVLQKLPKVKCINSDWSLAEIKAINLLKCSNQICLFHTLTAIRCKRLASKKNMTESLFHQQFQSLLNYEWVDDNIFDPTRYEEKYQEKVSEYQIREIVRLVRIAICDHILLHSAGLNKVFQDSDSENVKVLKLYEYHLKQLYVITVQKFSLPCYFCYLFNQYYNFTSFQIMSRVGKPTFFSVLRTSMMCESYFNQLKSWNLSGSRNYRFDTLIYILLNKEVAKIKESIRITKKFEKEYDSNCLVQNHRKHLPTWRKQWIIEWKNILQELNCLQEKDVFNECQQYGTNMTTWICGCNDAKVSPSSTCIHLVSLYKQKFPFYHGYTLQRFGKRNNGVPLVQHESLQSDTKIESTENMSFEISDVTINGVCNTTKQMSDANCRKLDYETEIDMISENKHSEIDDESEGKLRIFNFFLADEETRLLITQCPSFKSIIEEMTYIKQRTQSEPQWKAKTNKPEKGFKYDSWIRCLKYYQCYADVKANGNFPLPF</sequence>
<reference key="1">
    <citation type="journal article" date="2000" name="Genetics">
        <title>Kluyveromyces lactis Sir2p regulates cation sensitivity and maintains a specialized chromatin structure at the cryptic alpha-locus.</title>
        <authorList>
            <person name="Aastroem S.U."/>
            <person name="Kegel A."/>
            <person name="Sjoestrand J.O.O."/>
            <person name="Rine J."/>
        </authorList>
    </citation>
    <scope>NUCLEOTIDE SEQUENCE [GENOMIC DNA]</scope>
    <scope>FUNCTION</scope>
    <scope>DEVELOPMENTAL STAGE</scope>
</reference>
<reference key="2">
    <citation type="journal article" date="2004" name="Nature">
        <title>Genome evolution in yeasts.</title>
        <authorList>
            <person name="Dujon B."/>
            <person name="Sherman D."/>
            <person name="Fischer G."/>
            <person name="Durrens P."/>
            <person name="Casaregola S."/>
            <person name="Lafontaine I."/>
            <person name="de Montigny J."/>
            <person name="Marck C."/>
            <person name="Neuveglise C."/>
            <person name="Talla E."/>
            <person name="Goffard N."/>
            <person name="Frangeul L."/>
            <person name="Aigle M."/>
            <person name="Anthouard V."/>
            <person name="Babour A."/>
            <person name="Barbe V."/>
            <person name="Barnay S."/>
            <person name="Blanchin S."/>
            <person name="Beckerich J.-M."/>
            <person name="Beyne E."/>
            <person name="Bleykasten C."/>
            <person name="Boisrame A."/>
            <person name="Boyer J."/>
            <person name="Cattolico L."/>
            <person name="Confanioleri F."/>
            <person name="de Daruvar A."/>
            <person name="Despons L."/>
            <person name="Fabre E."/>
            <person name="Fairhead C."/>
            <person name="Ferry-Dumazet H."/>
            <person name="Groppi A."/>
            <person name="Hantraye F."/>
            <person name="Hennequin C."/>
            <person name="Jauniaux N."/>
            <person name="Joyet P."/>
            <person name="Kachouri R."/>
            <person name="Kerrest A."/>
            <person name="Koszul R."/>
            <person name="Lemaire M."/>
            <person name="Lesur I."/>
            <person name="Ma L."/>
            <person name="Muller H."/>
            <person name="Nicaud J.-M."/>
            <person name="Nikolski M."/>
            <person name="Oztas S."/>
            <person name="Ozier-Kalogeropoulos O."/>
            <person name="Pellenz S."/>
            <person name="Potier S."/>
            <person name="Richard G.-F."/>
            <person name="Straub M.-L."/>
            <person name="Suleau A."/>
            <person name="Swennen D."/>
            <person name="Tekaia F."/>
            <person name="Wesolowski-Louvel M."/>
            <person name="Westhof E."/>
            <person name="Wirth B."/>
            <person name="Zeniou-Meyer M."/>
            <person name="Zivanovic Y."/>
            <person name="Bolotin-Fukuhara M."/>
            <person name="Thierry A."/>
            <person name="Bouchier C."/>
            <person name="Caudron B."/>
            <person name="Scarpelli C."/>
            <person name="Gaillardin C."/>
            <person name="Weissenbach J."/>
            <person name="Wincker P."/>
            <person name="Souciet J.-L."/>
        </authorList>
    </citation>
    <scope>NUCLEOTIDE SEQUENCE [LARGE SCALE GENOMIC DNA]</scope>
    <source>
        <strain>ATCC 8585 / CBS 2359 / DSM 70799 / NBRC 1267 / NRRL Y-1140 / WM37</strain>
    </source>
</reference>
<protein>
    <recommendedName>
        <fullName>Mating-type protein ALPHA3</fullName>
        <shortName>Protein MAT-alpha-3</shortName>
    </recommendedName>
    <alternativeName>
        <fullName>Protein HML-alpha-3</fullName>
    </alternativeName>
</protein>
<dbReference type="EMBL" id="AF195066">
    <property type="protein sequence ID" value="AAG21090.1"/>
    <property type="molecule type" value="Genomic_DNA"/>
</dbReference>
<dbReference type="EMBL" id="CR382123">
    <property type="protein sequence ID" value="CAH01062.1"/>
    <property type="molecule type" value="Genomic_DNA"/>
</dbReference>
<dbReference type="RefSeq" id="XP_452212.1">
    <property type="nucleotide sequence ID" value="XM_452212.1"/>
</dbReference>
<dbReference type="STRING" id="284590.Q9HDS6"/>
<dbReference type="PaxDb" id="284590-Q9HDS6"/>
<dbReference type="KEGG" id="kla:KLLA0_C00396g"/>
<dbReference type="eggNOG" id="ENOG502T52Z">
    <property type="taxonomic scope" value="Eukaryota"/>
</dbReference>
<dbReference type="HOGENOM" id="CLU_322637_0_0_1"/>
<dbReference type="InParanoid" id="Q9HDS6"/>
<dbReference type="OMA" id="ARECFEC"/>
<dbReference type="Proteomes" id="UP000000598">
    <property type="component" value="Chromosome C"/>
</dbReference>
<evidence type="ECO:0000269" key="1">
    <source>
    </source>
</evidence>
<feature type="chain" id="PRO_0000096611" description="Mating-type protein ALPHA3">
    <location>
        <begin position="1"/>
        <end position="897"/>
    </location>
</feature>
<accession>Q9HDS6</accession>
<accession>Q6CV27</accession>